<protein>
    <recommendedName>
        <fullName evidence="1">Disulfide bond formation protein B</fullName>
    </recommendedName>
    <alternativeName>
        <fullName evidence="1">Disulfide oxidoreductase</fullName>
    </alternativeName>
</protein>
<accession>Q8XZM2</accession>
<evidence type="ECO:0000255" key="1">
    <source>
        <dbReference type="HAMAP-Rule" id="MF_00286"/>
    </source>
</evidence>
<organism>
    <name type="scientific">Ralstonia nicotianae (strain ATCC BAA-1114 / GMI1000)</name>
    <name type="common">Ralstonia solanacearum</name>
    <dbReference type="NCBI Taxonomy" id="267608"/>
    <lineage>
        <taxon>Bacteria</taxon>
        <taxon>Pseudomonadati</taxon>
        <taxon>Pseudomonadota</taxon>
        <taxon>Betaproteobacteria</taxon>
        <taxon>Burkholderiales</taxon>
        <taxon>Burkholderiaceae</taxon>
        <taxon>Ralstonia</taxon>
        <taxon>Ralstonia solanacearum species complex</taxon>
    </lineage>
</organism>
<reference key="1">
    <citation type="journal article" date="2002" name="Nature">
        <title>Genome sequence of the plant pathogen Ralstonia solanacearum.</title>
        <authorList>
            <person name="Salanoubat M."/>
            <person name="Genin S."/>
            <person name="Artiguenave F."/>
            <person name="Gouzy J."/>
            <person name="Mangenot S."/>
            <person name="Arlat M."/>
            <person name="Billault A."/>
            <person name="Brottier P."/>
            <person name="Camus J.-C."/>
            <person name="Cattolico L."/>
            <person name="Chandler M."/>
            <person name="Choisne N."/>
            <person name="Claudel-Renard C."/>
            <person name="Cunnac S."/>
            <person name="Demange N."/>
            <person name="Gaspin C."/>
            <person name="Lavie M."/>
            <person name="Moisan A."/>
            <person name="Robert C."/>
            <person name="Saurin W."/>
            <person name="Schiex T."/>
            <person name="Siguier P."/>
            <person name="Thebault P."/>
            <person name="Whalen M."/>
            <person name="Wincker P."/>
            <person name="Levy M."/>
            <person name="Weissenbach J."/>
            <person name="Boucher C.A."/>
        </authorList>
    </citation>
    <scope>NUCLEOTIDE SEQUENCE [LARGE SCALE GENOMIC DNA]</scope>
    <source>
        <strain>ATCC BAA-1114 / GMI1000</strain>
    </source>
</reference>
<keyword id="KW-0997">Cell inner membrane</keyword>
<keyword id="KW-1003">Cell membrane</keyword>
<keyword id="KW-0143">Chaperone</keyword>
<keyword id="KW-1015">Disulfide bond</keyword>
<keyword id="KW-0249">Electron transport</keyword>
<keyword id="KW-0472">Membrane</keyword>
<keyword id="KW-0560">Oxidoreductase</keyword>
<keyword id="KW-0676">Redox-active center</keyword>
<keyword id="KW-1185">Reference proteome</keyword>
<keyword id="KW-0812">Transmembrane</keyword>
<keyword id="KW-1133">Transmembrane helix</keyword>
<keyword id="KW-0813">Transport</keyword>
<gene>
    <name evidence="1" type="primary">dsbB</name>
    <name type="ordered locus">RSc1373</name>
    <name type="ORF">RS04656</name>
</gene>
<dbReference type="EMBL" id="AL646052">
    <property type="protein sequence ID" value="CAD15075.1"/>
    <property type="molecule type" value="Genomic_DNA"/>
</dbReference>
<dbReference type="RefSeq" id="WP_011001322.1">
    <property type="nucleotide sequence ID" value="NC_003295.1"/>
</dbReference>
<dbReference type="STRING" id="267608.RSc1373"/>
<dbReference type="EnsemblBacteria" id="CAD15075">
    <property type="protein sequence ID" value="CAD15075"/>
    <property type="gene ID" value="RSc1373"/>
</dbReference>
<dbReference type="KEGG" id="rso:RSc1373"/>
<dbReference type="eggNOG" id="COG1495">
    <property type="taxonomic scope" value="Bacteria"/>
</dbReference>
<dbReference type="HOGENOM" id="CLU_098660_1_0_4"/>
<dbReference type="Proteomes" id="UP000001436">
    <property type="component" value="Chromosome"/>
</dbReference>
<dbReference type="GO" id="GO:0005886">
    <property type="term" value="C:plasma membrane"/>
    <property type="evidence" value="ECO:0007669"/>
    <property type="project" value="UniProtKB-SubCell"/>
</dbReference>
<dbReference type="GO" id="GO:0009055">
    <property type="term" value="F:electron transfer activity"/>
    <property type="evidence" value="ECO:0007669"/>
    <property type="project" value="UniProtKB-UniRule"/>
</dbReference>
<dbReference type="GO" id="GO:0015035">
    <property type="term" value="F:protein-disulfide reductase activity"/>
    <property type="evidence" value="ECO:0007669"/>
    <property type="project" value="UniProtKB-UniRule"/>
</dbReference>
<dbReference type="GO" id="GO:0006457">
    <property type="term" value="P:protein folding"/>
    <property type="evidence" value="ECO:0007669"/>
    <property type="project" value="InterPro"/>
</dbReference>
<dbReference type="Gene3D" id="1.20.1550.10">
    <property type="entry name" value="DsbB-like"/>
    <property type="match status" value="1"/>
</dbReference>
<dbReference type="HAMAP" id="MF_00286">
    <property type="entry name" value="DsbB"/>
    <property type="match status" value="1"/>
</dbReference>
<dbReference type="InterPro" id="IPR003752">
    <property type="entry name" value="DiS_bond_form_DsbB/BdbC"/>
</dbReference>
<dbReference type="InterPro" id="IPR022920">
    <property type="entry name" value="Disulphide_bond_form_DsbB"/>
</dbReference>
<dbReference type="InterPro" id="IPR050183">
    <property type="entry name" value="DsbB"/>
</dbReference>
<dbReference type="InterPro" id="IPR023380">
    <property type="entry name" value="DsbB-like_sf"/>
</dbReference>
<dbReference type="NCBIfam" id="NF002552">
    <property type="entry name" value="PRK02110.1"/>
    <property type="match status" value="1"/>
</dbReference>
<dbReference type="PANTHER" id="PTHR36570">
    <property type="entry name" value="DISULFIDE BOND FORMATION PROTEIN B"/>
    <property type="match status" value="1"/>
</dbReference>
<dbReference type="PANTHER" id="PTHR36570:SF3">
    <property type="entry name" value="DISULFIDE BOND FORMATION PROTEIN B"/>
    <property type="match status" value="1"/>
</dbReference>
<dbReference type="Pfam" id="PF02600">
    <property type="entry name" value="DsbB"/>
    <property type="match status" value="1"/>
</dbReference>
<dbReference type="SUPFAM" id="SSF158442">
    <property type="entry name" value="DsbB-like"/>
    <property type="match status" value="1"/>
</dbReference>
<comment type="function">
    <text evidence="1">Required for disulfide bond formation in some periplasmic proteins. Acts by oxidizing the DsbA protein.</text>
</comment>
<comment type="subcellular location">
    <subcellularLocation>
        <location evidence="1">Cell inner membrane</location>
        <topology evidence="1">Multi-pass membrane protein</topology>
    </subcellularLocation>
</comment>
<comment type="similarity">
    <text evidence="1">Belongs to the DsbB family.</text>
</comment>
<feature type="chain" id="PRO_0000059355" description="Disulfide bond formation protein B">
    <location>
        <begin position="1"/>
        <end position="159"/>
    </location>
</feature>
<feature type="topological domain" description="Cytoplasmic" evidence="1">
    <location>
        <begin position="1"/>
        <end position="8"/>
    </location>
</feature>
<feature type="transmembrane region" description="Helical" evidence="1">
    <location>
        <begin position="9"/>
        <end position="25"/>
    </location>
</feature>
<feature type="topological domain" description="Periplasmic" evidence="1">
    <location>
        <begin position="26"/>
        <end position="43"/>
    </location>
</feature>
<feature type="transmembrane region" description="Helical" evidence="1">
    <location>
        <begin position="44"/>
        <end position="57"/>
    </location>
</feature>
<feature type="topological domain" description="Cytoplasmic" evidence="1">
    <location>
        <begin position="58"/>
        <end position="63"/>
    </location>
</feature>
<feature type="transmembrane region" description="Helical" evidence="1">
    <location>
        <begin position="64"/>
        <end position="81"/>
    </location>
</feature>
<feature type="topological domain" description="Periplasmic" evidence="1">
    <location>
        <begin position="82"/>
        <end position="136"/>
    </location>
</feature>
<feature type="transmembrane region" description="Helical" evidence="1">
    <location>
        <begin position="137"/>
        <end position="155"/>
    </location>
</feature>
<feature type="topological domain" description="Cytoplasmic" evidence="1">
    <location>
        <begin position="156"/>
        <end position="159"/>
    </location>
</feature>
<feature type="disulfide bond" description="Redox-active" evidence="1">
    <location>
        <begin position="35"/>
        <end position="38"/>
    </location>
</feature>
<feature type="disulfide bond" description="Redox-active" evidence="1">
    <location>
        <begin position="94"/>
        <end position="122"/>
    </location>
</feature>
<proteinExistence type="inferred from homology"/>
<name>DSBB_RALN1</name>
<sequence length="159" mass="17241">MQANSRAFFLLIAVIAFGLVGYALYLQHVEGLQPCPLCVLQRFAFVGIGVFSLLAALSSATRLLWHGLGMLSGLGGIFVAGYHVSLLLNPKASCGIDPIENWVNALPTAKWLPQVFESDGLCTAPLPPVLGVSIPLWSLIWMVILALTLVVAMIRRERR</sequence>